<reference key="1">
    <citation type="journal article" date="2008" name="PLoS ONE">
        <title>Comparative analysis of Acinetobacters: three genomes for three lifestyles.</title>
        <authorList>
            <person name="Vallenet D."/>
            <person name="Nordmann P."/>
            <person name="Barbe V."/>
            <person name="Poirel L."/>
            <person name="Mangenot S."/>
            <person name="Bataille E."/>
            <person name="Dossat C."/>
            <person name="Gas S."/>
            <person name="Kreimeyer A."/>
            <person name="Lenoble P."/>
            <person name="Oztas S."/>
            <person name="Poulain J."/>
            <person name="Segurens B."/>
            <person name="Robert C."/>
            <person name="Abergel C."/>
            <person name="Claverie J.-M."/>
            <person name="Raoult D."/>
            <person name="Medigue C."/>
            <person name="Weissenbach J."/>
            <person name="Cruveiller S."/>
        </authorList>
    </citation>
    <scope>NUCLEOTIDE SEQUENCE [LARGE SCALE GENOMIC DNA]</scope>
    <source>
        <strain>SDF</strain>
    </source>
</reference>
<gene>
    <name evidence="1" type="primary">sstT</name>
    <name type="ordered locus">ABSDF2098</name>
</gene>
<organism>
    <name type="scientific">Acinetobacter baumannii (strain SDF)</name>
    <dbReference type="NCBI Taxonomy" id="509170"/>
    <lineage>
        <taxon>Bacteria</taxon>
        <taxon>Pseudomonadati</taxon>
        <taxon>Pseudomonadota</taxon>
        <taxon>Gammaproteobacteria</taxon>
        <taxon>Moraxellales</taxon>
        <taxon>Moraxellaceae</taxon>
        <taxon>Acinetobacter</taxon>
        <taxon>Acinetobacter calcoaceticus/baumannii complex</taxon>
    </lineage>
</organism>
<protein>
    <recommendedName>
        <fullName evidence="1">Serine/threonine transporter SstT</fullName>
    </recommendedName>
    <alternativeName>
        <fullName evidence="1">Na(+)/serine-threonine symporter</fullName>
    </alternativeName>
</protein>
<name>SSTT_ACIBS</name>
<proteinExistence type="inferred from homology"/>
<evidence type="ECO:0000255" key="1">
    <source>
        <dbReference type="HAMAP-Rule" id="MF_01582"/>
    </source>
</evidence>
<comment type="function">
    <text evidence="1">Involved in the import of serine and threonine into the cell, with the concomitant import of sodium (symport system).</text>
</comment>
<comment type="catalytic activity">
    <reaction evidence="1">
        <text>L-serine(in) + Na(+)(in) = L-serine(out) + Na(+)(out)</text>
        <dbReference type="Rhea" id="RHEA:29575"/>
        <dbReference type="ChEBI" id="CHEBI:29101"/>
        <dbReference type="ChEBI" id="CHEBI:33384"/>
    </reaction>
    <physiologicalReaction direction="right-to-left" evidence="1">
        <dbReference type="Rhea" id="RHEA:29577"/>
    </physiologicalReaction>
</comment>
<comment type="catalytic activity">
    <reaction evidence="1">
        <text>L-threonine(in) + Na(+)(in) = L-threonine(out) + Na(+)(out)</text>
        <dbReference type="Rhea" id="RHEA:69999"/>
        <dbReference type="ChEBI" id="CHEBI:29101"/>
        <dbReference type="ChEBI" id="CHEBI:57926"/>
    </reaction>
    <physiologicalReaction direction="right-to-left" evidence="1">
        <dbReference type="Rhea" id="RHEA:70001"/>
    </physiologicalReaction>
</comment>
<comment type="subcellular location">
    <subcellularLocation>
        <location evidence="1">Cell inner membrane</location>
        <topology evidence="1">Multi-pass membrane protein</topology>
    </subcellularLocation>
</comment>
<comment type="similarity">
    <text evidence="1">Belongs to the dicarboxylate/amino acid:cation symporter (DAACS) (TC 2.A.23) family.</text>
</comment>
<keyword id="KW-0029">Amino-acid transport</keyword>
<keyword id="KW-0997">Cell inner membrane</keyword>
<keyword id="KW-1003">Cell membrane</keyword>
<keyword id="KW-0472">Membrane</keyword>
<keyword id="KW-0769">Symport</keyword>
<keyword id="KW-0812">Transmembrane</keyword>
<keyword id="KW-1133">Transmembrane helix</keyword>
<keyword id="KW-0813">Transport</keyword>
<feature type="chain" id="PRO_1000197548" description="Serine/threonine transporter SstT">
    <location>
        <begin position="1"/>
        <end position="400"/>
    </location>
</feature>
<feature type="transmembrane region" description="Helical" evidence="1">
    <location>
        <begin position="14"/>
        <end position="34"/>
    </location>
</feature>
<feature type="transmembrane region" description="Helical" evidence="1">
    <location>
        <begin position="48"/>
        <end position="68"/>
    </location>
</feature>
<feature type="transmembrane region" description="Helical" evidence="1">
    <location>
        <begin position="76"/>
        <end position="96"/>
    </location>
</feature>
<feature type="transmembrane region" description="Helical" evidence="1">
    <location>
        <begin position="136"/>
        <end position="156"/>
    </location>
</feature>
<feature type="transmembrane region" description="Helical" evidence="1">
    <location>
        <begin position="177"/>
        <end position="197"/>
    </location>
</feature>
<feature type="transmembrane region" description="Helical" evidence="1">
    <location>
        <begin position="211"/>
        <end position="231"/>
    </location>
</feature>
<feature type="transmembrane region" description="Helical" evidence="1">
    <location>
        <begin position="293"/>
        <end position="313"/>
    </location>
</feature>
<feature type="transmembrane region" description="Helical" evidence="1">
    <location>
        <begin position="334"/>
        <end position="354"/>
    </location>
</feature>
<sequence length="400" mass="41533">MLEFFSRLSLVTKIIIAIILGIGVALLFPTVTPYLSLFGELFIKALKSVAPILAFVLVLSSIANFQVGHSANLRPVLLLYVVGMLLAAFSAVIASLSFPSTLYLNTVSHNNLQAPGSLADILKNLLLSFIANPVQAISEANFIGILAWAIGLGLAMRHSSDTTKQVMQDVSHAVSAIIHKVIAFAPVGIFGLVAVTFADAGLATLESYAQLLAVLLGTMLFVALVINPILVGLTIRGNPYPLVFKCLKESGITAFFTRSSAANIPVNLDLAERLGVNPSTASVSIPLGATVNLAGAAVTITVLTLATVHTLGIHVDLATMIILSVVATVSACGASGVAGGSLLLIPVACSLFGISSEIAMQVVAVGMIISVLQDSTETALNSSTDVLFTAAVDIRSRQNS</sequence>
<dbReference type="EMBL" id="CU468230">
    <property type="protein sequence ID" value="CAP01426.1"/>
    <property type="molecule type" value="Genomic_DNA"/>
</dbReference>
<dbReference type="SMR" id="B0VR07"/>
<dbReference type="KEGG" id="abm:ABSDF2098"/>
<dbReference type="HOGENOM" id="CLU_044581_0_0_6"/>
<dbReference type="Proteomes" id="UP000001741">
    <property type="component" value="Chromosome"/>
</dbReference>
<dbReference type="GO" id="GO:0005886">
    <property type="term" value="C:plasma membrane"/>
    <property type="evidence" value="ECO:0007669"/>
    <property type="project" value="UniProtKB-SubCell"/>
</dbReference>
<dbReference type="GO" id="GO:0015171">
    <property type="term" value="F:amino acid transmembrane transporter activity"/>
    <property type="evidence" value="ECO:0007669"/>
    <property type="project" value="UniProtKB-UniRule"/>
</dbReference>
<dbReference type="GO" id="GO:0015293">
    <property type="term" value="F:symporter activity"/>
    <property type="evidence" value="ECO:0007669"/>
    <property type="project" value="UniProtKB-UniRule"/>
</dbReference>
<dbReference type="GO" id="GO:0032329">
    <property type="term" value="P:serine transport"/>
    <property type="evidence" value="ECO:0007669"/>
    <property type="project" value="InterPro"/>
</dbReference>
<dbReference type="GO" id="GO:0015826">
    <property type="term" value="P:threonine transport"/>
    <property type="evidence" value="ECO:0007669"/>
    <property type="project" value="InterPro"/>
</dbReference>
<dbReference type="FunFam" id="1.10.3860.10:FF:000003">
    <property type="entry name" value="Serine/threonine transporter sstT"/>
    <property type="match status" value="1"/>
</dbReference>
<dbReference type="Gene3D" id="1.10.3860.10">
    <property type="entry name" value="Sodium:dicarboxylate symporter"/>
    <property type="match status" value="1"/>
</dbReference>
<dbReference type="HAMAP" id="MF_01582">
    <property type="entry name" value="Ser_Thr_transp_SstT"/>
    <property type="match status" value="1"/>
</dbReference>
<dbReference type="InterPro" id="IPR001991">
    <property type="entry name" value="Na-dicarboxylate_symporter"/>
</dbReference>
<dbReference type="InterPro" id="IPR036458">
    <property type="entry name" value="Na:dicarbo_symporter_sf"/>
</dbReference>
<dbReference type="InterPro" id="IPR023025">
    <property type="entry name" value="Ser_Thr_transp_SstT"/>
</dbReference>
<dbReference type="NCBIfam" id="NF010151">
    <property type="entry name" value="PRK13628.1"/>
    <property type="match status" value="1"/>
</dbReference>
<dbReference type="PANTHER" id="PTHR42865">
    <property type="entry name" value="PROTON/GLUTAMATE-ASPARTATE SYMPORTER"/>
    <property type="match status" value="1"/>
</dbReference>
<dbReference type="PANTHER" id="PTHR42865:SF7">
    <property type="entry name" value="PROTON_GLUTAMATE-ASPARTATE SYMPORTER"/>
    <property type="match status" value="1"/>
</dbReference>
<dbReference type="Pfam" id="PF00375">
    <property type="entry name" value="SDF"/>
    <property type="match status" value="1"/>
</dbReference>
<dbReference type="PRINTS" id="PR00173">
    <property type="entry name" value="EDTRNSPORT"/>
</dbReference>
<dbReference type="SUPFAM" id="SSF118215">
    <property type="entry name" value="Proton glutamate symport protein"/>
    <property type="match status" value="1"/>
</dbReference>
<accession>B0VR07</accession>